<evidence type="ECO:0000250" key="1"/>
<evidence type="ECO:0000250" key="2">
    <source>
        <dbReference type="UniProtKB" id="Q26710"/>
    </source>
</evidence>
<evidence type="ECO:0000255" key="3"/>
<evidence type="ECO:0000305" key="4"/>
<keyword id="KW-0249">Electron transport</keyword>
<keyword id="KW-0408">Iron</keyword>
<keyword id="KW-0472">Membrane</keyword>
<keyword id="KW-0479">Metal-binding</keyword>
<keyword id="KW-0496">Mitochondrion</keyword>
<keyword id="KW-0999">Mitochondrion inner membrane</keyword>
<keyword id="KW-0560">Oxidoreductase</keyword>
<keyword id="KW-1185">Reference proteome</keyword>
<keyword id="KW-0679">Respiratory chain</keyword>
<keyword id="KW-0809">Transit peptide</keyword>
<keyword id="KW-0812">Transmembrane</keyword>
<keyword id="KW-1133">Transmembrane helix</keyword>
<keyword id="KW-0813">Transport</keyword>
<accession>F4P6T0</accession>
<comment type="function">
    <text evidence="1">Alternative oxidase which function may be to reoxidize reducing equivalents produced by glycolysis such as ubiquinol.</text>
</comment>
<comment type="catalytic activity">
    <reaction>
        <text>2 a ubiquinol + O2 = 2 a ubiquinone + 2 H2O</text>
        <dbReference type="Rhea" id="RHEA:30255"/>
        <dbReference type="Rhea" id="RHEA-COMP:9565"/>
        <dbReference type="Rhea" id="RHEA-COMP:9566"/>
        <dbReference type="ChEBI" id="CHEBI:15377"/>
        <dbReference type="ChEBI" id="CHEBI:15379"/>
        <dbReference type="ChEBI" id="CHEBI:16389"/>
        <dbReference type="ChEBI" id="CHEBI:17976"/>
        <dbReference type="EC" id="1.10.3.11"/>
    </reaction>
</comment>
<comment type="cofactor">
    <cofactor evidence="2">
        <name>Fe cation</name>
        <dbReference type="ChEBI" id="CHEBI:24875"/>
    </cofactor>
    <text evidence="2">Binds 2 iron ions per subunit.</text>
</comment>
<comment type="subcellular location">
    <subcellularLocation>
        <location evidence="4">Mitochondrion inner membrane</location>
        <topology evidence="4">Multi-pass membrane protein</topology>
    </subcellularLocation>
</comment>
<comment type="similarity">
    <text evidence="4">Belongs to the alternative oxidase family.</text>
</comment>
<protein>
    <recommendedName>
        <fullName>Ubiquinol oxidase, mitochondrial</fullName>
        <ecNumber>1.10.3.11</ecNumber>
    </recommendedName>
    <alternativeName>
        <fullName>Alternative oxidase</fullName>
    </alternativeName>
</protein>
<reference key="1">
    <citation type="submission" date="2009-12" db="EMBL/GenBank/DDBJ databases">
        <title>The draft genome of Batrachochytrium dendrobatidis.</title>
        <authorList>
            <consortium name="US DOE Joint Genome Institute (JGI-PGF)"/>
            <person name="Kuo A."/>
            <person name="Salamov A."/>
            <person name="Schmutz J."/>
            <person name="Lucas S."/>
            <person name="Pitluck S."/>
            <person name="Rosenblum E."/>
            <person name="Stajich J."/>
            <person name="Eisen M."/>
            <person name="Grigoriev I.V."/>
        </authorList>
    </citation>
    <scope>NUCLEOTIDE SEQUENCE [LARGE SCALE GENOMIC DNA]</scope>
    <source>
        <strain>JAM81 / FGSC 10211</strain>
    </source>
</reference>
<gene>
    <name type="primary">AOX</name>
    <name type="ORF">BATDEDRAFT_32033</name>
</gene>
<proteinExistence type="inferred from homology"/>
<name>AOX_BATDJ</name>
<sequence length="316" mass="35873">MGVRAQPLLARSLITTTQPWILSARSKPSSLLSQPWNKTVHNQAHVAEQPTDPANMEKLVGRHHPLPIRSEFVGSTPIDTATLEKIEVGAGLHRIPVSISDWTAYGIVRFLRFFADLFFRKQYVHRAVVLETVAAVPGMVAGMLRHLTSLRLMRHDGGWISHLLSEAENERLHLLTWMKVCQPSLFERMLVALVQTLFFNVYFLAYMLFPKTAHRMVGYLEEEAIISYTHFLAEIDAGNIPNGPAPKLAIDYWNLKEDATVRDVVLAVRADEANHRDMNHHFADRIVIHQEDLRHMVTADSLKPIVKLSKVDIKSD</sequence>
<organism>
    <name type="scientific">Batrachochytrium dendrobatidis (strain JAM81 / FGSC 10211)</name>
    <name type="common">Frog chytrid fungus</name>
    <dbReference type="NCBI Taxonomy" id="684364"/>
    <lineage>
        <taxon>Eukaryota</taxon>
        <taxon>Fungi</taxon>
        <taxon>Fungi incertae sedis</taxon>
        <taxon>Chytridiomycota</taxon>
        <taxon>Chytridiomycota incertae sedis</taxon>
        <taxon>Chytridiomycetes</taxon>
        <taxon>Rhizophydiales</taxon>
        <taxon>Rhizophydiales incertae sedis</taxon>
        <taxon>Batrachochytrium</taxon>
    </lineage>
</organism>
<feature type="transit peptide" description="Mitochondrion" evidence="3">
    <location>
        <begin position="1"/>
        <end position="26"/>
    </location>
</feature>
<feature type="chain" id="PRO_0000415494" description="Ubiquinol oxidase, mitochondrial">
    <location>
        <begin position="27"/>
        <end position="316"/>
    </location>
</feature>
<feature type="transmembrane region" description="Helical" evidence="3">
    <location>
        <begin position="124"/>
        <end position="144"/>
    </location>
</feature>
<feature type="transmembrane region" description="Helical" evidence="3">
    <location>
        <begin position="189"/>
        <end position="209"/>
    </location>
</feature>
<feature type="binding site" evidence="2">
    <location>
        <position position="131"/>
    </location>
    <ligand>
        <name>Fe cation</name>
        <dbReference type="ChEBI" id="CHEBI:24875"/>
        <label>1</label>
    </ligand>
</feature>
<feature type="binding site" evidence="2">
    <location>
        <position position="170"/>
    </location>
    <ligand>
        <name>Fe cation</name>
        <dbReference type="ChEBI" id="CHEBI:24875"/>
        <label>1</label>
    </ligand>
</feature>
<feature type="binding site" evidence="2">
    <location>
        <position position="170"/>
    </location>
    <ligand>
        <name>Fe cation</name>
        <dbReference type="ChEBI" id="CHEBI:24875"/>
        <label>2</label>
    </ligand>
</feature>
<feature type="binding site" evidence="2">
    <location>
        <position position="173"/>
    </location>
    <ligand>
        <name>Fe cation</name>
        <dbReference type="ChEBI" id="CHEBI:24875"/>
        <label>1</label>
    </ligand>
</feature>
<feature type="binding site" evidence="2">
    <location>
        <position position="221"/>
    </location>
    <ligand>
        <name>Fe cation</name>
        <dbReference type="ChEBI" id="CHEBI:24875"/>
        <label>2</label>
    </ligand>
</feature>
<feature type="binding site" evidence="2">
    <location>
        <position position="272"/>
    </location>
    <ligand>
        <name>Fe cation</name>
        <dbReference type="ChEBI" id="CHEBI:24875"/>
        <label>1</label>
    </ligand>
</feature>
<feature type="binding site" evidence="2">
    <location>
        <position position="272"/>
    </location>
    <ligand>
        <name>Fe cation</name>
        <dbReference type="ChEBI" id="CHEBI:24875"/>
        <label>2</label>
    </ligand>
</feature>
<feature type="binding site" evidence="2">
    <location>
        <position position="275"/>
    </location>
    <ligand>
        <name>Fe cation</name>
        <dbReference type="ChEBI" id="CHEBI:24875"/>
        <label>2</label>
    </ligand>
</feature>
<dbReference type="EC" id="1.10.3.11"/>
<dbReference type="EMBL" id="GL882887">
    <property type="protein sequence ID" value="EGF78872.1"/>
    <property type="molecule type" value="Genomic_DNA"/>
</dbReference>
<dbReference type="RefSeq" id="XP_006680383.1">
    <property type="nucleotide sequence ID" value="XM_006680320.1"/>
</dbReference>
<dbReference type="SMR" id="F4P6T0"/>
<dbReference type="STRING" id="684364.F4P6T0"/>
<dbReference type="GeneID" id="18240065"/>
<dbReference type="HOGENOM" id="CLU_041974_2_1_1"/>
<dbReference type="InParanoid" id="F4P6T0"/>
<dbReference type="OMA" id="RISKDYW"/>
<dbReference type="OrthoDB" id="16906at2759"/>
<dbReference type="Proteomes" id="UP000007241">
    <property type="component" value="Unassembled WGS sequence"/>
</dbReference>
<dbReference type="GO" id="GO:0005743">
    <property type="term" value="C:mitochondrial inner membrane"/>
    <property type="evidence" value="ECO:0007669"/>
    <property type="project" value="UniProtKB-SubCell"/>
</dbReference>
<dbReference type="GO" id="GO:0005739">
    <property type="term" value="C:mitochondrion"/>
    <property type="evidence" value="ECO:0000318"/>
    <property type="project" value="GO_Central"/>
</dbReference>
<dbReference type="GO" id="GO:0009916">
    <property type="term" value="F:alternative oxidase activity"/>
    <property type="evidence" value="ECO:0000318"/>
    <property type="project" value="GO_Central"/>
</dbReference>
<dbReference type="GO" id="GO:0046872">
    <property type="term" value="F:metal ion binding"/>
    <property type="evidence" value="ECO:0007669"/>
    <property type="project" value="UniProtKB-KW"/>
</dbReference>
<dbReference type="GO" id="GO:0102721">
    <property type="term" value="F:ubiquinol:oxygen oxidoreductase activity"/>
    <property type="evidence" value="ECO:0007669"/>
    <property type="project" value="UniProtKB-EC"/>
</dbReference>
<dbReference type="GO" id="GO:0010230">
    <property type="term" value="P:alternative respiration"/>
    <property type="evidence" value="ECO:0000318"/>
    <property type="project" value="GO_Central"/>
</dbReference>
<dbReference type="CDD" id="cd01053">
    <property type="entry name" value="AOX"/>
    <property type="match status" value="1"/>
</dbReference>
<dbReference type="FunFam" id="1.20.1260.140:FF:000004">
    <property type="entry name" value="Mitochondrial alternative oxidase"/>
    <property type="match status" value="1"/>
</dbReference>
<dbReference type="Gene3D" id="1.20.1260.140">
    <property type="entry name" value="Alternative oxidase"/>
    <property type="match status" value="1"/>
</dbReference>
<dbReference type="InterPro" id="IPR002680">
    <property type="entry name" value="AOX"/>
</dbReference>
<dbReference type="InterPro" id="IPR038659">
    <property type="entry name" value="AOX_sf"/>
</dbReference>
<dbReference type="PANTHER" id="PTHR31803">
    <property type="entry name" value="ALTERNATIVE OXIDASE"/>
    <property type="match status" value="1"/>
</dbReference>
<dbReference type="PANTHER" id="PTHR31803:SF3">
    <property type="entry name" value="ALTERNATIVE OXIDASE"/>
    <property type="match status" value="1"/>
</dbReference>
<dbReference type="Pfam" id="PF01786">
    <property type="entry name" value="AOX"/>
    <property type="match status" value="1"/>
</dbReference>